<accession>Q6UW49</accession>
<accession>Q8NG22</accession>
<accession>Q8WVH8</accession>
<sequence length="350" mass="38931">MKPLVLLVALLLWPSSVPAYPSITVTPDEEQNLNHYIQVLENLVRSVPSGEPGREKKSNSPKHVYSIASKGSKFKELVTHGDASTENDVLTNPISEETTTFPTGGFTPEIGKKKHTESTPFWSIKPNNVSIVLHAEEPYIENEEPEPEPEPAAKQTEAPRMLPVVTESSTSPYVTSYKSPVTTLDKSTGIGISTESEDVPQLSGETAIEKPEEFGKHPESWNNDDILKKILDINSQVQQALLSDTSNPAYREDIEASKDHLKRSLALAAAAEHKLKTMYKSQLLPVGRTSNKIDDIETVINMLCNSRSKLYEYLDIKCVPPEMREKAATVFNTLKNMCRSRRVTALLKVY</sequence>
<protein>
    <recommendedName>
        <fullName evidence="7">Sperm equatorial segment protein 1</fullName>
        <shortName evidence="5">SP-ESP</shortName>
    </recommendedName>
    <alternativeName>
        <fullName evidence="5">Equatorial segment protein</fullName>
        <shortName evidence="5">ESP</shortName>
    </alternativeName>
    <alternativeName>
        <fullName>Glycosylated 38 kDa sperm protein C-7/8</fullName>
    </alternativeName>
</protein>
<keyword id="KW-0968">Cytoplasmic vesicle</keyword>
<keyword id="KW-0217">Developmental protein</keyword>
<keyword id="KW-0903">Direct protein sequencing</keyword>
<keyword id="KW-0325">Glycoprotein</keyword>
<keyword id="KW-1267">Proteomics identification</keyword>
<keyword id="KW-1185">Reference proteome</keyword>
<keyword id="KW-0732">Signal</keyword>
<reference key="1">
    <citation type="journal article" date="2003" name="Biol. Reprod.">
        <title>Equatorial segment protein defines a discrete acrosomal subcompartment persisting throughout acrosomal biogenesis.</title>
        <authorList>
            <person name="Wolkowicz M.J."/>
            <person name="Shetty J."/>
            <person name="Westbrook A."/>
            <person name="Klotz K."/>
            <person name="Jayes F."/>
            <person name="Mandal A."/>
            <person name="Flickinger C.J."/>
            <person name="Herr J.C."/>
        </authorList>
    </citation>
    <scope>NUCLEOTIDE SEQUENCE [MRNA]</scope>
    <scope>PROTEIN SEQUENCE OF 179-186; 264-274; 310-317 AND 328-335</scope>
    <scope>IDENTIFICATION BY MASS SPECTROMETRY</scope>
    <scope>SUBCELLULAR LOCATION</scope>
    <scope>TISSUE SPECIFICITY</scope>
    <scope>VARIANT GLU-191</scope>
</reference>
<reference key="2">
    <citation type="journal article" date="2003" name="Genome Res.">
        <title>The secreted protein discovery initiative (SPDI), a large-scale effort to identify novel human secreted and transmembrane proteins: a bioinformatics assessment.</title>
        <authorList>
            <person name="Clark H.F."/>
            <person name="Gurney A.L."/>
            <person name="Abaya E."/>
            <person name="Baker K."/>
            <person name="Baldwin D.T."/>
            <person name="Brush J."/>
            <person name="Chen J."/>
            <person name="Chow B."/>
            <person name="Chui C."/>
            <person name="Crowley C."/>
            <person name="Currell B."/>
            <person name="Deuel B."/>
            <person name="Dowd P."/>
            <person name="Eaton D."/>
            <person name="Foster J.S."/>
            <person name="Grimaldi C."/>
            <person name="Gu Q."/>
            <person name="Hass P.E."/>
            <person name="Heldens S."/>
            <person name="Huang A."/>
            <person name="Kim H.S."/>
            <person name="Klimowski L."/>
            <person name="Jin Y."/>
            <person name="Johnson S."/>
            <person name="Lee J."/>
            <person name="Lewis L."/>
            <person name="Liao D."/>
            <person name="Mark M.R."/>
            <person name="Robbie E."/>
            <person name="Sanchez C."/>
            <person name="Schoenfeld J."/>
            <person name="Seshagiri S."/>
            <person name="Simmons L."/>
            <person name="Singh J."/>
            <person name="Smith V."/>
            <person name="Stinson J."/>
            <person name="Vagts A."/>
            <person name="Vandlen R.L."/>
            <person name="Watanabe C."/>
            <person name="Wieand D."/>
            <person name="Woods K."/>
            <person name="Xie M.-H."/>
            <person name="Yansura D.G."/>
            <person name="Yi S."/>
            <person name="Yu G."/>
            <person name="Yuan J."/>
            <person name="Zhang M."/>
            <person name="Zhang Z."/>
            <person name="Goddard A.D."/>
            <person name="Wood W.I."/>
            <person name="Godowski P.J."/>
            <person name="Gray A.M."/>
        </authorList>
    </citation>
    <scope>NUCLEOTIDE SEQUENCE [LARGE SCALE MRNA]</scope>
    <scope>VARIANT GLU-191</scope>
</reference>
<reference key="3">
    <citation type="journal article" date="2006" name="Nature">
        <title>Analysis of the DNA sequence and duplication history of human chromosome 15.</title>
        <authorList>
            <person name="Zody M.C."/>
            <person name="Garber M."/>
            <person name="Sharpe T."/>
            <person name="Young S.K."/>
            <person name="Rowen L."/>
            <person name="O'Neill K."/>
            <person name="Whittaker C.A."/>
            <person name="Kamal M."/>
            <person name="Chang J.L."/>
            <person name="Cuomo C.A."/>
            <person name="Dewar K."/>
            <person name="FitzGerald M.G."/>
            <person name="Kodira C.D."/>
            <person name="Madan A."/>
            <person name="Qin S."/>
            <person name="Yang X."/>
            <person name="Abbasi N."/>
            <person name="Abouelleil A."/>
            <person name="Arachchi H.M."/>
            <person name="Baradarani L."/>
            <person name="Birditt B."/>
            <person name="Bloom S."/>
            <person name="Bloom T."/>
            <person name="Borowsky M.L."/>
            <person name="Burke J."/>
            <person name="Butler J."/>
            <person name="Cook A."/>
            <person name="DeArellano K."/>
            <person name="DeCaprio D."/>
            <person name="Dorris L. III"/>
            <person name="Dors M."/>
            <person name="Eichler E.E."/>
            <person name="Engels R."/>
            <person name="Fahey J."/>
            <person name="Fleetwood P."/>
            <person name="Friedman C."/>
            <person name="Gearin G."/>
            <person name="Hall J.L."/>
            <person name="Hensley G."/>
            <person name="Johnson E."/>
            <person name="Jones C."/>
            <person name="Kamat A."/>
            <person name="Kaur A."/>
            <person name="Locke D.P."/>
            <person name="Madan A."/>
            <person name="Munson G."/>
            <person name="Jaffe D.B."/>
            <person name="Lui A."/>
            <person name="Macdonald P."/>
            <person name="Mauceli E."/>
            <person name="Naylor J.W."/>
            <person name="Nesbitt R."/>
            <person name="Nicol R."/>
            <person name="O'Leary S.B."/>
            <person name="Ratcliffe A."/>
            <person name="Rounsley S."/>
            <person name="She X."/>
            <person name="Sneddon K.M.B."/>
            <person name="Stewart S."/>
            <person name="Sougnez C."/>
            <person name="Stone S.M."/>
            <person name="Topham K."/>
            <person name="Vincent D."/>
            <person name="Wang S."/>
            <person name="Zimmer A.R."/>
            <person name="Birren B.W."/>
            <person name="Hood L."/>
            <person name="Lander E.S."/>
            <person name="Nusbaum C."/>
        </authorList>
    </citation>
    <scope>NUCLEOTIDE SEQUENCE [LARGE SCALE GENOMIC DNA]</scope>
</reference>
<reference key="4">
    <citation type="journal article" date="2004" name="Genome Res.">
        <title>The status, quality, and expansion of the NIH full-length cDNA project: the Mammalian Gene Collection (MGC).</title>
        <authorList>
            <consortium name="The MGC Project Team"/>
        </authorList>
    </citation>
    <scope>NUCLEOTIDE SEQUENCE [LARGE SCALE MRNA]</scope>
    <source>
        <tissue>Skin</tissue>
    </source>
</reference>
<name>SPESP_HUMAN</name>
<organism>
    <name type="scientific">Homo sapiens</name>
    <name type="common">Human</name>
    <dbReference type="NCBI Taxonomy" id="9606"/>
    <lineage>
        <taxon>Eukaryota</taxon>
        <taxon>Metazoa</taxon>
        <taxon>Chordata</taxon>
        <taxon>Craniata</taxon>
        <taxon>Vertebrata</taxon>
        <taxon>Euteleostomi</taxon>
        <taxon>Mammalia</taxon>
        <taxon>Eutheria</taxon>
        <taxon>Euarchontoglires</taxon>
        <taxon>Primates</taxon>
        <taxon>Haplorrhini</taxon>
        <taxon>Catarrhini</taxon>
        <taxon>Hominidae</taxon>
        <taxon>Homo</taxon>
    </lineage>
</organism>
<feature type="signal peptide" evidence="2">
    <location>
        <begin position="1"/>
        <end position="19"/>
    </location>
</feature>
<feature type="chain" id="PRO_0000042707" description="Sperm equatorial segment protein 1">
    <location>
        <begin position="20"/>
        <end position="350"/>
    </location>
</feature>
<feature type="glycosylation site" description="N-linked (GlcNAc...) asparagine" evidence="2">
    <location>
        <position position="128"/>
    </location>
</feature>
<feature type="sequence variant" id="VAR_031430" description="In dbSNP:rs3743091.">
    <original>L</original>
    <variation>F</variation>
    <location>
        <position position="133"/>
    </location>
</feature>
<feature type="sequence variant" id="VAR_056994" description="In dbSNP:rs16952684.">
    <original>H</original>
    <variation>Q</variation>
    <location>
        <position position="134"/>
    </location>
</feature>
<feature type="sequence variant" id="VAR_023738" description="In dbSNP:rs3743093." evidence="3 4">
    <original>G</original>
    <variation>E</variation>
    <location>
        <position position="191"/>
    </location>
</feature>
<feature type="sequence conflict" description="In Ref. 1; AAM69364." evidence="6" ref="1">
    <original>S</original>
    <variation>Y</variation>
    <location>
        <position position="193"/>
    </location>
</feature>
<feature type="sequence conflict" description="In Ref. 1; AAM69364." evidence="6" ref="1">
    <original>R</original>
    <variation>P</variation>
    <location>
        <position position="263"/>
    </location>
</feature>
<feature type="sequence conflict" description="In Ref. 1; AAM69364." evidence="6" ref="1">
    <original>E</original>
    <variation>V</variation>
    <location>
        <position position="297"/>
    </location>
</feature>
<comment type="function">
    <text evidence="1">Involved in fertilization ability of sperm.</text>
</comment>
<comment type="subcellular location">
    <subcellularLocation>
        <location evidence="3">Cytoplasmic vesicle</location>
        <location evidence="3">Secretory vesicle</location>
        <location evidence="3">Acrosome</location>
    </subcellularLocation>
    <text evidence="1 3">Small proacrosomal granules (during the Golgi phase), enlarged acrosomal vesicles (during the cap phase), acrosome (during the elongating phase), equatorial segment of the acrosome (during the maturation phase) (PubMed:12773409). After acrosome reaction localizes to the equatorial segment region in both noncapacitated and capacitated, acrosome-reacted sperm (By similarity).</text>
</comment>
<comment type="tissue specificity">
    <text evidence="3">Highly expressed in testis, where it is localized in the acrosome of postmeiotic stages of spermiogenesis (round and elongating spermatids and in ejaculated spermatozoa) (at protein level). Poorly expressed in placenta and fetal lung.</text>
</comment>
<comment type="PTM">
    <text evidence="1">Glycosylated. In testis there are two predominant forms of 77- and 67-kDa and a form of 47-kDa, whereas in epididymal sperm from caput, corpus, and cauda there are two forms of 47- and 43-kDa. Testis forms contain complex carbohydrate residues. Epididymal sperm forms are N-glycosylated. Then undergoes significant glycosylation in the testis and that the majority of these glycoconjugates are removed by the time sperm reach the caput epididymis.</text>
</comment>
<comment type="similarity">
    <text evidence="6">Belongs to the SPESP1 family.</text>
</comment>
<evidence type="ECO:0000250" key="1">
    <source>
        <dbReference type="UniProtKB" id="Q9D5A0"/>
    </source>
</evidence>
<evidence type="ECO:0000255" key="2"/>
<evidence type="ECO:0000269" key="3">
    <source>
    </source>
</evidence>
<evidence type="ECO:0000269" key="4">
    <source>
    </source>
</evidence>
<evidence type="ECO:0000303" key="5">
    <source>
    </source>
</evidence>
<evidence type="ECO:0000305" key="6"/>
<evidence type="ECO:0000312" key="7">
    <source>
        <dbReference type="HGNC" id="HGNC:15570"/>
    </source>
</evidence>
<dbReference type="EMBL" id="AF275321">
    <property type="protein sequence ID" value="AAM69364.1"/>
    <property type="molecule type" value="mRNA"/>
</dbReference>
<dbReference type="EMBL" id="AY358983">
    <property type="protein sequence ID" value="AAQ89342.1"/>
    <property type="molecule type" value="mRNA"/>
</dbReference>
<dbReference type="EMBL" id="AC087639">
    <property type="status" value="NOT_ANNOTATED_CDS"/>
    <property type="molecule type" value="Genomic_DNA"/>
</dbReference>
<dbReference type="EMBL" id="BC017998">
    <property type="protein sequence ID" value="AAH17998.1"/>
    <property type="molecule type" value="mRNA"/>
</dbReference>
<dbReference type="CCDS" id="CCDS10230.1"/>
<dbReference type="RefSeq" id="NP_663633.1">
    <property type="nucleotide sequence ID" value="NM_145658.4"/>
</dbReference>
<dbReference type="SMR" id="Q6UW49"/>
<dbReference type="BioGRID" id="128923">
    <property type="interactions" value="2"/>
</dbReference>
<dbReference type="FunCoup" id="Q6UW49">
    <property type="interactions" value="492"/>
</dbReference>
<dbReference type="STRING" id="9606.ENSP00000312284"/>
<dbReference type="GlyCosmos" id="Q6UW49">
    <property type="glycosylation" value="1 site, No reported glycans"/>
</dbReference>
<dbReference type="GlyGen" id="Q6UW49">
    <property type="glycosylation" value="1 site"/>
</dbReference>
<dbReference type="iPTMnet" id="Q6UW49"/>
<dbReference type="PhosphoSitePlus" id="Q6UW49"/>
<dbReference type="BioMuta" id="SPESP1"/>
<dbReference type="DMDM" id="317373280"/>
<dbReference type="MassIVE" id="Q6UW49"/>
<dbReference type="PaxDb" id="9606-ENSP00000312284"/>
<dbReference type="PeptideAtlas" id="Q6UW49"/>
<dbReference type="ProteomicsDB" id="67445"/>
<dbReference type="Antibodypedia" id="51298">
    <property type="antibodies" value="77 antibodies from 16 providers"/>
</dbReference>
<dbReference type="DNASU" id="246777"/>
<dbReference type="Ensembl" id="ENST00000310673.4">
    <property type="protein sequence ID" value="ENSP00000312284.3"/>
    <property type="gene ID" value="ENSG00000258484.4"/>
</dbReference>
<dbReference type="GeneID" id="246777"/>
<dbReference type="KEGG" id="hsa:246777"/>
<dbReference type="MANE-Select" id="ENST00000310673.4">
    <property type="protein sequence ID" value="ENSP00000312284.3"/>
    <property type="RefSeq nucleotide sequence ID" value="NM_145658.4"/>
    <property type="RefSeq protein sequence ID" value="NP_663633.1"/>
</dbReference>
<dbReference type="UCSC" id="uc002arn.2">
    <property type="organism name" value="human"/>
</dbReference>
<dbReference type="AGR" id="HGNC:15570"/>
<dbReference type="CTD" id="246777"/>
<dbReference type="DisGeNET" id="246777"/>
<dbReference type="GeneCards" id="SPESP1"/>
<dbReference type="HGNC" id="HGNC:15570">
    <property type="gene designation" value="SPESP1"/>
</dbReference>
<dbReference type="HPA" id="ENSG00000258484">
    <property type="expression patterns" value="Tissue enriched (testis)"/>
</dbReference>
<dbReference type="MIM" id="609399">
    <property type="type" value="gene"/>
</dbReference>
<dbReference type="neXtProt" id="NX_Q6UW49"/>
<dbReference type="OpenTargets" id="ENSG00000258484"/>
<dbReference type="PharmGKB" id="PA37980"/>
<dbReference type="VEuPathDB" id="HostDB:ENSG00000258484"/>
<dbReference type="eggNOG" id="ENOG502SG7W">
    <property type="taxonomic scope" value="Eukaryota"/>
</dbReference>
<dbReference type="GeneTree" id="ENSGT00390000005362"/>
<dbReference type="HOGENOM" id="CLU_787463_0_0_1"/>
<dbReference type="InParanoid" id="Q6UW49"/>
<dbReference type="OMA" id="TESTAFW"/>
<dbReference type="OrthoDB" id="9530574at2759"/>
<dbReference type="PAN-GO" id="Q6UW49">
    <property type="GO annotations" value="3 GO annotations based on evolutionary models"/>
</dbReference>
<dbReference type="PhylomeDB" id="Q6UW49"/>
<dbReference type="TreeFam" id="TF337441"/>
<dbReference type="PathwayCommons" id="Q6UW49"/>
<dbReference type="BioGRID-ORCS" id="246777">
    <property type="hits" value="7 hits in 1124 CRISPR screens"/>
</dbReference>
<dbReference type="ChiTaRS" id="SPESP1">
    <property type="organism name" value="human"/>
</dbReference>
<dbReference type="GenomeRNAi" id="246777"/>
<dbReference type="Pharos" id="Q6UW49">
    <property type="development level" value="Tbio"/>
</dbReference>
<dbReference type="PRO" id="PR:Q6UW49"/>
<dbReference type="Proteomes" id="UP000005640">
    <property type="component" value="Chromosome 15"/>
</dbReference>
<dbReference type="RNAct" id="Q6UW49">
    <property type="molecule type" value="protein"/>
</dbReference>
<dbReference type="Bgee" id="ENSG00000258484">
    <property type="expression patterns" value="Expressed in sperm and 131 other cell types or tissues"/>
</dbReference>
<dbReference type="GO" id="GO:0001669">
    <property type="term" value="C:acrosomal vesicle"/>
    <property type="evidence" value="ECO:0000318"/>
    <property type="project" value="GO_Central"/>
</dbReference>
<dbReference type="GO" id="GO:0045171">
    <property type="term" value="C:intercellular bridge"/>
    <property type="evidence" value="ECO:0000314"/>
    <property type="project" value="HPA"/>
</dbReference>
<dbReference type="GO" id="GO:0015630">
    <property type="term" value="C:microtubule cytoskeleton"/>
    <property type="evidence" value="ECO:0000314"/>
    <property type="project" value="HPA"/>
</dbReference>
<dbReference type="GO" id="GO:0072686">
    <property type="term" value="C:mitotic spindle"/>
    <property type="evidence" value="ECO:0000314"/>
    <property type="project" value="HPA"/>
</dbReference>
<dbReference type="GO" id="GO:0007340">
    <property type="term" value="P:acrosome reaction"/>
    <property type="evidence" value="ECO:0000318"/>
    <property type="project" value="GO_Central"/>
</dbReference>
<dbReference type="GO" id="GO:0009566">
    <property type="term" value="P:fertilization"/>
    <property type="evidence" value="ECO:0000250"/>
    <property type="project" value="UniProtKB"/>
</dbReference>
<dbReference type="GO" id="GO:0007342">
    <property type="term" value="P:fusion of sperm to egg plasma membrane involved in single fertilization"/>
    <property type="evidence" value="ECO:0000318"/>
    <property type="project" value="GO_Central"/>
</dbReference>
<dbReference type="GO" id="GO:0035036">
    <property type="term" value="P:sperm-egg recognition"/>
    <property type="evidence" value="ECO:0000250"/>
    <property type="project" value="UniProtKB"/>
</dbReference>
<dbReference type="InterPro" id="IPR026743">
    <property type="entry name" value="Equatorial_segment"/>
</dbReference>
<dbReference type="PANTHER" id="PTHR31667">
    <property type="entry name" value="SPERM EQUATORIAL SEGMENT PROTEIN 1"/>
    <property type="match status" value="1"/>
</dbReference>
<dbReference type="PANTHER" id="PTHR31667:SF2">
    <property type="entry name" value="SPERM EQUATORIAL SEGMENT PROTEIN 1"/>
    <property type="match status" value="1"/>
</dbReference>
<dbReference type="Pfam" id="PF15754">
    <property type="entry name" value="SPESP1"/>
    <property type="match status" value="1"/>
</dbReference>
<gene>
    <name evidence="7" type="primary">SPESP1</name>
    <name type="ORF">UNQ732/PRO1418</name>
</gene>
<proteinExistence type="evidence at protein level"/>